<proteinExistence type="inferred from homology"/>
<accession>A7FIE5</accession>
<gene>
    <name evidence="1" type="primary">mdtH</name>
    <name type="ordered locus">YpsIP31758_2050</name>
</gene>
<organism>
    <name type="scientific">Yersinia pseudotuberculosis serotype O:1b (strain IP 31758)</name>
    <dbReference type="NCBI Taxonomy" id="349747"/>
    <lineage>
        <taxon>Bacteria</taxon>
        <taxon>Pseudomonadati</taxon>
        <taxon>Pseudomonadota</taxon>
        <taxon>Gammaproteobacteria</taxon>
        <taxon>Enterobacterales</taxon>
        <taxon>Yersiniaceae</taxon>
        <taxon>Yersinia</taxon>
    </lineage>
</organism>
<evidence type="ECO:0000255" key="1">
    <source>
        <dbReference type="HAMAP-Rule" id="MF_01529"/>
    </source>
</evidence>
<sequence length="401" mass="44285">MALVSQARSLGKYFLLFDNLLVVLGFFVVFPLISIRFVDQLGWAALVVGLALGLRQLVQQGLGIFGGAIADRFGAKPMIVTGMLMRAAGFALMAMADEPWILWLACALSGLGGTLFDPPRTALVIKLTRPHERGRFYSLLMMQDSAGAVIGALIGSWLLQYDFHFVCWTGAAIFVLAAGWNAWLLPAYRISTVRAPMKEGLMRVLRDRRFVTYVLTLTGYYMLAVQVMLMLPIVVNELAGSPAAVKWMYAIEAALSLTLLYPLARWSEKRFSLEQRLMAGLLIMTLSLFPIGMITHLQTLFMFICFFYMGSILAEPARETLGASLADSRARGSYMGFSRLGLALGGALGYTGGGWMYDTGKTLDMPELPWFLLGIIGLITLAGLYWQFNRRRIESAMLSSS</sequence>
<protein>
    <recommendedName>
        <fullName evidence="1">Multidrug resistance protein MdtH</fullName>
    </recommendedName>
</protein>
<keyword id="KW-0997">Cell inner membrane</keyword>
<keyword id="KW-1003">Cell membrane</keyword>
<keyword id="KW-0472">Membrane</keyword>
<keyword id="KW-0812">Transmembrane</keyword>
<keyword id="KW-1133">Transmembrane helix</keyword>
<keyword id="KW-0813">Transport</keyword>
<name>MDTH_YERP3</name>
<comment type="subcellular location">
    <subcellularLocation>
        <location evidence="1">Cell inner membrane</location>
        <topology evidence="1">Multi-pass membrane protein</topology>
    </subcellularLocation>
</comment>
<comment type="similarity">
    <text evidence="1">Belongs to the major facilitator superfamily. DHA1 family. MdtH (TC 2.A.1.2.21) subfamily.</text>
</comment>
<feature type="chain" id="PRO_1000068683" description="Multidrug resistance protein MdtH">
    <location>
        <begin position="1"/>
        <end position="401"/>
    </location>
</feature>
<feature type="transmembrane region" description="Helical" evidence="1">
    <location>
        <begin position="13"/>
        <end position="33"/>
    </location>
</feature>
<feature type="transmembrane region" description="Helical" evidence="1">
    <location>
        <begin position="34"/>
        <end position="54"/>
    </location>
</feature>
<feature type="transmembrane region" description="Helical" evidence="1">
    <location>
        <begin position="99"/>
        <end position="116"/>
    </location>
</feature>
<feature type="transmembrane region" description="Helical" evidence="1">
    <location>
        <begin position="139"/>
        <end position="159"/>
    </location>
</feature>
<feature type="transmembrane region" description="Helical" evidence="1">
    <location>
        <begin position="165"/>
        <end position="185"/>
    </location>
</feature>
<feature type="transmembrane region" description="Helical" evidence="1">
    <location>
        <begin position="214"/>
        <end position="234"/>
    </location>
</feature>
<feature type="transmembrane region" description="Helical" evidence="1">
    <location>
        <begin position="243"/>
        <end position="263"/>
    </location>
</feature>
<feature type="transmembrane region" description="Helical" evidence="1">
    <location>
        <begin position="277"/>
        <end position="297"/>
    </location>
</feature>
<feature type="transmembrane region" description="Helical" evidence="1">
    <location>
        <begin position="299"/>
        <end position="319"/>
    </location>
</feature>
<feature type="transmembrane region" description="Helical" evidence="1">
    <location>
        <begin position="340"/>
        <end position="360"/>
    </location>
</feature>
<feature type="transmembrane region" description="Helical" evidence="1">
    <location>
        <begin position="368"/>
        <end position="388"/>
    </location>
</feature>
<dbReference type="EMBL" id="CP000720">
    <property type="protein sequence ID" value="ABS48171.1"/>
    <property type="molecule type" value="Genomic_DNA"/>
</dbReference>
<dbReference type="RefSeq" id="WP_002211217.1">
    <property type="nucleotide sequence ID" value="NC_009708.1"/>
</dbReference>
<dbReference type="SMR" id="A7FIE5"/>
<dbReference type="GeneID" id="57976620"/>
<dbReference type="KEGG" id="ypi:YpsIP31758_2050"/>
<dbReference type="HOGENOM" id="CLU_001265_60_2_6"/>
<dbReference type="Proteomes" id="UP000002412">
    <property type="component" value="Chromosome"/>
</dbReference>
<dbReference type="GO" id="GO:0005886">
    <property type="term" value="C:plasma membrane"/>
    <property type="evidence" value="ECO:0007669"/>
    <property type="project" value="UniProtKB-SubCell"/>
</dbReference>
<dbReference type="GO" id="GO:0022857">
    <property type="term" value="F:transmembrane transporter activity"/>
    <property type="evidence" value="ECO:0007669"/>
    <property type="project" value="UniProtKB-UniRule"/>
</dbReference>
<dbReference type="CDD" id="cd17329">
    <property type="entry name" value="MFS_MdtH_MDR_like"/>
    <property type="match status" value="1"/>
</dbReference>
<dbReference type="Gene3D" id="1.20.1250.20">
    <property type="entry name" value="MFS general substrate transporter like domains"/>
    <property type="match status" value="1"/>
</dbReference>
<dbReference type="HAMAP" id="MF_01529">
    <property type="entry name" value="MFS_MdtH"/>
    <property type="match status" value="1"/>
</dbReference>
<dbReference type="InterPro" id="IPR011701">
    <property type="entry name" value="MFS"/>
</dbReference>
<dbReference type="InterPro" id="IPR020846">
    <property type="entry name" value="MFS_dom"/>
</dbReference>
<dbReference type="InterPro" id="IPR036259">
    <property type="entry name" value="MFS_trans_sf"/>
</dbReference>
<dbReference type="InterPro" id="IPR050171">
    <property type="entry name" value="MFS_Transporters"/>
</dbReference>
<dbReference type="InterPro" id="IPR022855">
    <property type="entry name" value="Multidrug-R_MdtH"/>
</dbReference>
<dbReference type="NCBIfam" id="NF008650">
    <property type="entry name" value="PRK11646.1"/>
    <property type="match status" value="1"/>
</dbReference>
<dbReference type="PANTHER" id="PTHR23517:SF2">
    <property type="entry name" value="MULTIDRUG RESISTANCE PROTEIN MDTH"/>
    <property type="match status" value="1"/>
</dbReference>
<dbReference type="PANTHER" id="PTHR23517">
    <property type="entry name" value="RESISTANCE PROTEIN MDTM, PUTATIVE-RELATED-RELATED"/>
    <property type="match status" value="1"/>
</dbReference>
<dbReference type="Pfam" id="PF07690">
    <property type="entry name" value="MFS_1"/>
    <property type="match status" value="1"/>
</dbReference>
<dbReference type="SUPFAM" id="SSF103473">
    <property type="entry name" value="MFS general substrate transporter"/>
    <property type="match status" value="1"/>
</dbReference>
<dbReference type="PROSITE" id="PS50850">
    <property type="entry name" value="MFS"/>
    <property type="match status" value="1"/>
</dbReference>
<reference key="1">
    <citation type="journal article" date="2007" name="PLoS Genet.">
        <title>The complete genome sequence of Yersinia pseudotuberculosis IP31758, the causative agent of Far East scarlet-like fever.</title>
        <authorList>
            <person name="Eppinger M."/>
            <person name="Rosovitz M.J."/>
            <person name="Fricke W.F."/>
            <person name="Rasko D.A."/>
            <person name="Kokorina G."/>
            <person name="Fayolle C."/>
            <person name="Lindler L.E."/>
            <person name="Carniel E."/>
            <person name="Ravel J."/>
        </authorList>
    </citation>
    <scope>NUCLEOTIDE SEQUENCE [LARGE SCALE GENOMIC DNA]</scope>
    <source>
        <strain>IP 31758</strain>
    </source>
</reference>